<name>AROD_STAES</name>
<proteinExistence type="inferred from homology"/>
<comment type="function">
    <text evidence="1">Involved in the third step of the chorismate pathway, which leads to the biosynthesis of aromatic amino acids. Catalyzes the cis-dehydration of 3-dehydroquinate (DHQ) and introduces the first double bond of the aromatic ring to yield 3-dehydroshikimate.</text>
</comment>
<comment type="catalytic activity">
    <reaction evidence="1">
        <text>3-dehydroquinate = 3-dehydroshikimate + H2O</text>
        <dbReference type="Rhea" id="RHEA:21096"/>
        <dbReference type="ChEBI" id="CHEBI:15377"/>
        <dbReference type="ChEBI" id="CHEBI:16630"/>
        <dbReference type="ChEBI" id="CHEBI:32364"/>
        <dbReference type="EC" id="4.2.1.10"/>
    </reaction>
</comment>
<comment type="pathway">
    <text evidence="1">Metabolic intermediate biosynthesis; chorismate biosynthesis; chorismate from D-erythrose 4-phosphate and phosphoenolpyruvate: step 3/7.</text>
</comment>
<comment type="subunit">
    <text evidence="1">Homodimer.</text>
</comment>
<comment type="similarity">
    <text evidence="1">Belongs to the type-I 3-dehydroquinase family.</text>
</comment>
<organism>
    <name type="scientific">Staphylococcus epidermidis (strain ATCC 12228 / FDA PCI 1200)</name>
    <dbReference type="NCBI Taxonomy" id="176280"/>
    <lineage>
        <taxon>Bacteria</taxon>
        <taxon>Bacillati</taxon>
        <taxon>Bacillota</taxon>
        <taxon>Bacilli</taxon>
        <taxon>Bacillales</taxon>
        <taxon>Staphylococcaceae</taxon>
        <taxon>Staphylococcus</taxon>
    </lineage>
</organism>
<feature type="chain" id="PRO_0000138814" description="3-dehydroquinate dehydratase">
    <location>
        <begin position="1"/>
        <end position="238"/>
    </location>
</feature>
<feature type="active site" description="Proton donor/acceptor" evidence="1">
    <location>
        <position position="131"/>
    </location>
</feature>
<feature type="active site" description="Schiff-base intermediate with substrate" evidence="1">
    <location>
        <position position="158"/>
    </location>
</feature>
<feature type="binding site" evidence="1">
    <location>
        <begin position="35"/>
        <end position="37"/>
    </location>
    <ligand>
        <name>3-dehydroquinate</name>
        <dbReference type="ChEBI" id="CHEBI:32364"/>
    </ligand>
</feature>
<feature type="binding site" evidence="1">
    <location>
        <position position="68"/>
    </location>
    <ligand>
        <name>3-dehydroquinate</name>
        <dbReference type="ChEBI" id="CHEBI:32364"/>
    </ligand>
</feature>
<feature type="binding site" evidence="1">
    <location>
        <position position="200"/>
    </location>
    <ligand>
        <name>3-dehydroquinate</name>
        <dbReference type="ChEBI" id="CHEBI:32364"/>
    </ligand>
</feature>
<feature type="binding site" evidence="1">
    <location>
        <position position="223"/>
    </location>
    <ligand>
        <name>3-dehydroquinate</name>
        <dbReference type="ChEBI" id="CHEBI:32364"/>
    </ligand>
</feature>
<keyword id="KW-0028">Amino-acid biosynthesis</keyword>
<keyword id="KW-0057">Aromatic amino acid biosynthesis</keyword>
<keyword id="KW-0456">Lyase</keyword>
<keyword id="KW-0704">Schiff base</keyword>
<reference key="1">
    <citation type="journal article" date="2003" name="Mol. Microbiol.">
        <title>Genome-based analysis of virulence genes in a non-biofilm-forming Staphylococcus epidermidis strain (ATCC 12228).</title>
        <authorList>
            <person name="Zhang Y.-Q."/>
            <person name="Ren S.-X."/>
            <person name="Li H.-L."/>
            <person name="Wang Y.-X."/>
            <person name="Fu G."/>
            <person name="Yang J."/>
            <person name="Qin Z.-Q."/>
            <person name="Miao Y.-G."/>
            <person name="Wang W.-Y."/>
            <person name="Chen R.-S."/>
            <person name="Shen Y."/>
            <person name="Chen Z."/>
            <person name="Yuan Z.-H."/>
            <person name="Zhao G.-P."/>
            <person name="Qu D."/>
            <person name="Danchin A."/>
            <person name="Wen Y.-M."/>
        </authorList>
    </citation>
    <scope>NUCLEOTIDE SEQUENCE [LARGE SCALE GENOMIC DNA]</scope>
    <source>
        <strain>ATCC 12228 / FDA PCI 1200</strain>
    </source>
</reference>
<accession>Q8CPX1</accession>
<gene>
    <name evidence="1" type="primary">aroD</name>
    <name type="ordered locus">SE_0592</name>
</gene>
<dbReference type="EC" id="4.2.1.10" evidence="1"/>
<dbReference type="EMBL" id="AE015929">
    <property type="protein sequence ID" value="AAO04189.1"/>
    <property type="molecule type" value="Genomic_DNA"/>
</dbReference>
<dbReference type="RefSeq" id="NP_764147.1">
    <property type="nucleotide sequence ID" value="NC_004461.1"/>
</dbReference>
<dbReference type="RefSeq" id="WP_001831974.1">
    <property type="nucleotide sequence ID" value="NZ_WBME01000029.1"/>
</dbReference>
<dbReference type="SMR" id="Q8CPX1"/>
<dbReference type="GeneID" id="50019258"/>
<dbReference type="KEGG" id="sep:SE_0592"/>
<dbReference type="PATRIC" id="fig|176280.10.peg.564"/>
<dbReference type="eggNOG" id="COG0710">
    <property type="taxonomic scope" value="Bacteria"/>
</dbReference>
<dbReference type="HOGENOM" id="CLU_064444_2_1_9"/>
<dbReference type="OrthoDB" id="9813659at2"/>
<dbReference type="UniPathway" id="UPA00053">
    <property type="reaction ID" value="UER00086"/>
</dbReference>
<dbReference type="Proteomes" id="UP000001411">
    <property type="component" value="Chromosome"/>
</dbReference>
<dbReference type="GO" id="GO:0003855">
    <property type="term" value="F:3-dehydroquinate dehydratase activity"/>
    <property type="evidence" value="ECO:0007669"/>
    <property type="project" value="UniProtKB-UniRule"/>
</dbReference>
<dbReference type="GO" id="GO:0046279">
    <property type="term" value="P:3,4-dihydroxybenzoate biosynthetic process"/>
    <property type="evidence" value="ECO:0007669"/>
    <property type="project" value="TreeGrafter"/>
</dbReference>
<dbReference type="GO" id="GO:0008652">
    <property type="term" value="P:amino acid biosynthetic process"/>
    <property type="evidence" value="ECO:0007669"/>
    <property type="project" value="UniProtKB-KW"/>
</dbReference>
<dbReference type="GO" id="GO:0009073">
    <property type="term" value="P:aromatic amino acid family biosynthetic process"/>
    <property type="evidence" value="ECO:0007669"/>
    <property type="project" value="UniProtKB-KW"/>
</dbReference>
<dbReference type="GO" id="GO:0009423">
    <property type="term" value="P:chorismate biosynthetic process"/>
    <property type="evidence" value="ECO:0007669"/>
    <property type="project" value="UniProtKB-UniRule"/>
</dbReference>
<dbReference type="CDD" id="cd00502">
    <property type="entry name" value="DHQase_I"/>
    <property type="match status" value="1"/>
</dbReference>
<dbReference type="FunFam" id="3.20.20.70:FF:000047">
    <property type="entry name" value="3-dehydroquinate dehydratase"/>
    <property type="match status" value="1"/>
</dbReference>
<dbReference type="Gene3D" id="3.20.20.70">
    <property type="entry name" value="Aldolase class I"/>
    <property type="match status" value="1"/>
</dbReference>
<dbReference type="HAMAP" id="MF_00214">
    <property type="entry name" value="AroD"/>
    <property type="match status" value="1"/>
</dbReference>
<dbReference type="InterPro" id="IPR013785">
    <property type="entry name" value="Aldolase_TIM"/>
</dbReference>
<dbReference type="InterPro" id="IPR001381">
    <property type="entry name" value="DHquinase_I"/>
</dbReference>
<dbReference type="InterPro" id="IPR050146">
    <property type="entry name" value="Type-I_3-dehydroquinase"/>
</dbReference>
<dbReference type="NCBIfam" id="TIGR01093">
    <property type="entry name" value="aroD"/>
    <property type="match status" value="1"/>
</dbReference>
<dbReference type="PANTHER" id="PTHR43699">
    <property type="entry name" value="3-DEHYDROQUINATE DEHYDRATASE"/>
    <property type="match status" value="1"/>
</dbReference>
<dbReference type="PANTHER" id="PTHR43699:SF1">
    <property type="entry name" value="3-DEHYDROQUINATE DEHYDRATASE"/>
    <property type="match status" value="1"/>
</dbReference>
<dbReference type="Pfam" id="PF01487">
    <property type="entry name" value="DHquinase_I"/>
    <property type="match status" value="1"/>
</dbReference>
<dbReference type="SUPFAM" id="SSF51569">
    <property type="entry name" value="Aldolase"/>
    <property type="match status" value="1"/>
</dbReference>
<protein>
    <recommendedName>
        <fullName evidence="1">3-dehydroquinate dehydratase</fullName>
        <shortName evidence="1">3-dehydroquinase</shortName>
        <ecNumber evidence="1">4.2.1.10</ecNumber>
    </recommendedName>
    <alternativeName>
        <fullName evidence="1">Type I DHQase</fullName>
    </alternativeName>
    <alternativeName>
        <fullName evidence="1">Type I dehydroquinase</fullName>
        <shortName evidence="1">DHQ1</shortName>
    </alternativeName>
</protein>
<evidence type="ECO:0000255" key="1">
    <source>
        <dbReference type="HAMAP-Rule" id="MF_00214"/>
    </source>
</evidence>
<sequence length="238" mass="26944">MTHVDIAATIAPEDKLSKTLLKDIKVNEESIDIIELRIDQWPSFNKALLNEVIKQLKIFHLKILVTYRTSVQGGKGAVNEQEYLNILGELIECPQFDMIDIEWSSAVKIEKYTHLVQRAQQKGLEVVLSHHNFQETPALDELKFIYFKMQKLNPEYLKLAVMPKCQEDVLHLLEAMSLTAKHTTCRIVGISMSSLGKVSRIAQGVFGGTLSYGCIEEPQAPGQIHVSKLKSMVSFYED</sequence>